<protein>
    <recommendedName>
        <fullName evidence="1">HTH-type transcriptional regulator MalT</fullName>
    </recommendedName>
    <alternativeName>
        <fullName evidence="1">ATP-dependent transcriptional activator MalT</fullName>
    </alternativeName>
</protein>
<gene>
    <name evidence="1" type="primary">malT</name>
    <name type="ordered locus">SeD_A3885</name>
</gene>
<accession>B5FKD6</accession>
<proteinExistence type="inferred from homology"/>
<keyword id="KW-0010">Activator</keyword>
<keyword id="KW-0067">ATP-binding</keyword>
<keyword id="KW-0119">Carbohydrate metabolism</keyword>
<keyword id="KW-0238">DNA-binding</keyword>
<keyword id="KW-0547">Nucleotide-binding</keyword>
<keyword id="KW-0804">Transcription</keyword>
<keyword id="KW-0805">Transcription regulation</keyword>
<comment type="function">
    <text evidence="1">Positively regulates the transcription of the maltose regulon whose gene products are responsible for uptake and catabolism of malto-oligosaccharides. Specifically binds to the promoter region of its target genes, recognizing a short DNA motif called the MalT box.</text>
</comment>
<comment type="activity regulation">
    <text evidence="1">Activated by ATP and maltotriose, which are both required for DNA binding.</text>
</comment>
<comment type="subunit">
    <text evidence="1">Monomer in solution. Oligomerizes to an active state in the presence of the positive effectors ATP and maltotriose.</text>
</comment>
<comment type="similarity">
    <text evidence="1">Belongs to the MalT family.</text>
</comment>
<name>MALT_SALDC</name>
<evidence type="ECO:0000255" key="1">
    <source>
        <dbReference type="HAMAP-Rule" id="MF_01247"/>
    </source>
</evidence>
<feature type="chain" id="PRO_1000139854" description="HTH-type transcriptional regulator MalT">
    <location>
        <begin position="1"/>
        <end position="902"/>
    </location>
</feature>
<feature type="domain" description="HTH luxR-type" evidence="1">
    <location>
        <begin position="830"/>
        <end position="895"/>
    </location>
</feature>
<feature type="DNA-binding region" description="H-T-H motif" evidence="1">
    <location>
        <begin position="854"/>
        <end position="873"/>
    </location>
</feature>
<feature type="binding site" evidence="1">
    <location>
        <begin position="39"/>
        <end position="46"/>
    </location>
    <ligand>
        <name>ATP</name>
        <dbReference type="ChEBI" id="CHEBI:30616"/>
    </ligand>
</feature>
<reference key="1">
    <citation type="journal article" date="2011" name="J. Bacteriol.">
        <title>Comparative genomics of 28 Salmonella enterica isolates: evidence for CRISPR-mediated adaptive sublineage evolution.</title>
        <authorList>
            <person name="Fricke W.F."/>
            <person name="Mammel M.K."/>
            <person name="McDermott P.F."/>
            <person name="Tartera C."/>
            <person name="White D.G."/>
            <person name="Leclerc J.E."/>
            <person name="Ravel J."/>
            <person name="Cebula T.A."/>
        </authorList>
    </citation>
    <scope>NUCLEOTIDE SEQUENCE [LARGE SCALE GENOMIC DNA]</scope>
    <source>
        <strain>CT_02021853</strain>
    </source>
</reference>
<sequence length="902" mass="103144">MLIPSKLSRPVRLDHTVVRERLLAKLSGANNFRLALVTSPAGYGKTTLVSQWAAGKNELGWYSLDEGDNQQERFASYLIAAIQQATGGHCSTSEAMAQKRQYASLTSLFAQLFIELAQWHRPLYLVIDDYHLITNPVIHDAMRFFLRHQPENFTLVVLSRNLPQLGIANLRVRDQLLEIGSQQLAFNHQEAKQFFDRRLSSPIEAAESSRMCDDVAGWATALQLIALSARQNHTSAHHSARRLAGINASHLSDYLVDEVLDNVDVSTRHFLLKSAILRSMNDALIVRVTGEENGQMRLEEIERQGLFLQRMDDTGEWFSYHPLFGSFLRQRCQWELAAELPEIHRAAAESWMEQGFPSEAIHHALAAGDAQMLRDILLNHAWGLFNHSELALLEESLKALPWESLLENPRLVLLQAWLMQSQHRYSEVNTLLARAEQEIKGVMDGTLHAEFNALRAQVAINDGNPEEAERLAKLALDELPLAWFYSRIVATSVHGEVLHCKGDLSQSLSLMQQTEQMARHHDVWHYALWSLIQQSEIQFAQGFLQAAWETQERAFQLIKEQQHLEQLPMHEFLVRIRAQLLWAWARLDEAEASARSGIAVLSTFQPQQQLQCLTLLVQCSLARGDLDNARSQLNRLENLLGNGRYHCDWISNADKVRVIYWQLTGDKKSAANWLRHTPKPAFANNHFLQGQWRNIARAQILLGEFEPAEIVLEELNENARSLRLMSDLNRNLLLLNQLYWQSGRKNDAQRVLLDALQLANRTGFISHFVIEGEAMAQQLRQLIQLNTLPEMEQHRAQRILREINQHHRHKFAHFDEGFVERLLNHPDVPELIRTSPLTQREWQVLGLIYSGYSNEQIAGELAVAATTIKTHIRNLYQKLGVAHRQDAVQHAQQLLKMMGYGV</sequence>
<dbReference type="EMBL" id="CP001144">
    <property type="protein sequence ID" value="ACH74410.1"/>
    <property type="molecule type" value="Genomic_DNA"/>
</dbReference>
<dbReference type="RefSeq" id="WP_000907032.1">
    <property type="nucleotide sequence ID" value="NC_011205.1"/>
</dbReference>
<dbReference type="SMR" id="B5FKD6"/>
<dbReference type="KEGG" id="sed:SeD_A3885"/>
<dbReference type="HOGENOM" id="CLU_006325_3_0_6"/>
<dbReference type="Proteomes" id="UP000008322">
    <property type="component" value="Chromosome"/>
</dbReference>
<dbReference type="GO" id="GO:0005524">
    <property type="term" value="F:ATP binding"/>
    <property type="evidence" value="ECO:0007669"/>
    <property type="project" value="UniProtKB-UniRule"/>
</dbReference>
<dbReference type="GO" id="GO:0003677">
    <property type="term" value="F:DNA binding"/>
    <property type="evidence" value="ECO:0007669"/>
    <property type="project" value="UniProtKB-KW"/>
</dbReference>
<dbReference type="GO" id="GO:0003700">
    <property type="term" value="F:DNA-binding transcription factor activity"/>
    <property type="evidence" value="ECO:0007669"/>
    <property type="project" value="UniProtKB-UniRule"/>
</dbReference>
<dbReference type="GO" id="GO:0045913">
    <property type="term" value="P:positive regulation of carbohydrate metabolic process"/>
    <property type="evidence" value="ECO:0007669"/>
    <property type="project" value="UniProtKB-UniRule"/>
</dbReference>
<dbReference type="GO" id="GO:0045893">
    <property type="term" value="P:positive regulation of DNA-templated transcription"/>
    <property type="evidence" value="ECO:0007669"/>
    <property type="project" value="UniProtKB-UniRule"/>
</dbReference>
<dbReference type="CDD" id="cd06170">
    <property type="entry name" value="LuxR_C_like"/>
    <property type="match status" value="1"/>
</dbReference>
<dbReference type="FunFam" id="1.10.10.10:FF:000115">
    <property type="entry name" value="HTH-type transcriptional regulator MalT"/>
    <property type="match status" value="1"/>
</dbReference>
<dbReference type="Gene3D" id="1.25.40.10">
    <property type="entry name" value="Tetratricopeptide repeat domain"/>
    <property type="match status" value="1"/>
</dbReference>
<dbReference type="Gene3D" id="1.10.10.10">
    <property type="entry name" value="Winged helix-like DNA-binding domain superfamily/Winged helix DNA-binding domain"/>
    <property type="match status" value="1"/>
</dbReference>
<dbReference type="HAMAP" id="MF_01247">
    <property type="entry name" value="HTH_type_MalT"/>
    <property type="match status" value="1"/>
</dbReference>
<dbReference type="InterPro" id="IPR027417">
    <property type="entry name" value="P-loop_NTPase"/>
</dbReference>
<dbReference type="InterPro" id="IPR016032">
    <property type="entry name" value="Sig_transdc_resp-reg_C-effctor"/>
</dbReference>
<dbReference type="InterPro" id="IPR011990">
    <property type="entry name" value="TPR-like_helical_dom_sf"/>
</dbReference>
<dbReference type="InterPro" id="IPR041617">
    <property type="entry name" value="TPR_MalT"/>
</dbReference>
<dbReference type="InterPro" id="IPR023768">
    <property type="entry name" value="Tscrpt_reg_HTH_MalT"/>
</dbReference>
<dbReference type="InterPro" id="IPR000792">
    <property type="entry name" value="Tscrpt_reg_LuxR_C"/>
</dbReference>
<dbReference type="InterPro" id="IPR036388">
    <property type="entry name" value="WH-like_DNA-bd_sf"/>
</dbReference>
<dbReference type="NCBIfam" id="NF003420">
    <property type="entry name" value="PRK04841.1"/>
    <property type="match status" value="1"/>
</dbReference>
<dbReference type="PANTHER" id="PTHR44688">
    <property type="entry name" value="DNA-BINDING TRANSCRIPTIONAL ACTIVATOR DEVR_DOSR"/>
    <property type="match status" value="1"/>
</dbReference>
<dbReference type="PANTHER" id="PTHR44688:SF16">
    <property type="entry name" value="DNA-BINDING TRANSCRIPTIONAL ACTIVATOR DEVR_DOSR"/>
    <property type="match status" value="1"/>
</dbReference>
<dbReference type="Pfam" id="PF00196">
    <property type="entry name" value="GerE"/>
    <property type="match status" value="1"/>
</dbReference>
<dbReference type="Pfam" id="PF17874">
    <property type="entry name" value="TPR_MalT"/>
    <property type="match status" value="1"/>
</dbReference>
<dbReference type="PRINTS" id="PR00038">
    <property type="entry name" value="HTHLUXR"/>
</dbReference>
<dbReference type="SMART" id="SM00421">
    <property type="entry name" value="HTH_LUXR"/>
    <property type="match status" value="1"/>
</dbReference>
<dbReference type="SUPFAM" id="SSF46894">
    <property type="entry name" value="C-terminal effector domain of the bipartite response regulators"/>
    <property type="match status" value="1"/>
</dbReference>
<dbReference type="SUPFAM" id="SSF52540">
    <property type="entry name" value="P-loop containing nucleoside triphosphate hydrolases"/>
    <property type="match status" value="1"/>
</dbReference>
<dbReference type="SUPFAM" id="SSF48452">
    <property type="entry name" value="TPR-like"/>
    <property type="match status" value="1"/>
</dbReference>
<dbReference type="PROSITE" id="PS00622">
    <property type="entry name" value="HTH_LUXR_1"/>
    <property type="match status" value="1"/>
</dbReference>
<dbReference type="PROSITE" id="PS50043">
    <property type="entry name" value="HTH_LUXR_2"/>
    <property type="match status" value="1"/>
</dbReference>
<organism>
    <name type="scientific">Salmonella dublin (strain CT_02021853)</name>
    <dbReference type="NCBI Taxonomy" id="439851"/>
    <lineage>
        <taxon>Bacteria</taxon>
        <taxon>Pseudomonadati</taxon>
        <taxon>Pseudomonadota</taxon>
        <taxon>Gammaproteobacteria</taxon>
        <taxon>Enterobacterales</taxon>
        <taxon>Enterobacteriaceae</taxon>
        <taxon>Salmonella</taxon>
    </lineage>
</organism>